<proteinExistence type="evidence at protein level"/>
<protein>
    <recommendedName>
        <fullName>SCP domain-containing protein 1</fullName>
    </recommendedName>
    <alternativeName>
        <fullName>Uncharacterized shell protein 2</fullName>
        <shortName>LUSP-2</shortName>
    </alternativeName>
</protein>
<feature type="signal peptide" evidence="1">
    <location>
        <begin position="1"/>
        <end position="18"/>
    </location>
</feature>
<feature type="chain" id="PRO_0000415257" description="SCP domain-containing protein 1" evidence="1">
    <location>
        <begin position="19"/>
        <end position="336"/>
    </location>
</feature>
<feature type="domain" description="SCP" evidence="1">
    <location>
        <begin position="175"/>
        <end position="292"/>
    </location>
</feature>
<feature type="region of interest" description="Disordered" evidence="2">
    <location>
        <begin position="73"/>
        <end position="94"/>
    </location>
</feature>
<feature type="compositionally biased region" description="Polar residues" evidence="2">
    <location>
        <begin position="73"/>
        <end position="85"/>
    </location>
</feature>
<feature type="glycosylation site" description="N-linked (GlcNAc...) asparagine" evidence="1">
    <location>
        <position position="47"/>
    </location>
</feature>
<feature type="glycosylation site" description="N-linked (GlcNAc...) asparagine" evidence="1">
    <location>
        <position position="213"/>
    </location>
</feature>
<feature type="glycosylation site" description="N-linked (GlcNAc...) asparagine" evidence="1">
    <location>
        <position position="257"/>
    </location>
</feature>
<organism>
    <name type="scientific">Lottia gigantea</name>
    <name type="common">Giant owl limpet</name>
    <dbReference type="NCBI Taxonomy" id="225164"/>
    <lineage>
        <taxon>Eukaryota</taxon>
        <taxon>Metazoa</taxon>
        <taxon>Spiralia</taxon>
        <taxon>Lophotrochozoa</taxon>
        <taxon>Mollusca</taxon>
        <taxon>Gastropoda</taxon>
        <taxon>Patellogastropoda</taxon>
        <taxon>Lottioidea</taxon>
        <taxon>Lottiidae</taxon>
        <taxon>Lottia</taxon>
    </lineage>
</organism>
<keyword id="KW-0903">Direct protein sequencing</keyword>
<keyword id="KW-0325">Glycoprotein</keyword>
<keyword id="KW-0964">Secreted</keyword>
<keyword id="KW-0732">Signal</keyword>
<comment type="subcellular location">
    <subcellularLocation>
        <location evidence="3">Secreted</location>
    </subcellularLocation>
</comment>
<comment type="tissue specificity">
    <text evidence="3">Component of the acid-insoluble and acid-soluble organic matrix of calcified layers of the shell (at protein level).</text>
</comment>
<reference evidence="5" key="1">
    <citation type="submission" date="2007-12" db="EMBL/GenBank/DDBJ databases">
        <title>DOE Joint Genome Institute Lottia gigantea EST project.</title>
        <authorList>
            <person name="Richardson P."/>
            <person name="Lucas S."/>
            <person name="Rokhsar D."/>
            <person name="Wang M."/>
            <person name="Lindquist E.A."/>
        </authorList>
    </citation>
    <scope>NUCLEOTIDE SEQUENCE [LARGE SCALE MRNA]</scope>
    <scope>IDENTIFICATION</scope>
    <source>
        <tissue evidence="4">Mantle</tissue>
    </source>
</reference>
<reference key="2">
    <citation type="journal article" date="2013" name="FEBS J.">
        <title>The shell-forming proteome of Lottia gigantea reveals both deep conservations and lineage-specific novelties.</title>
        <authorList>
            <person name="Marie B."/>
            <person name="Jackson D.J."/>
            <person name="Ramos-Silva P."/>
            <person name="Zanella-Cleon I."/>
            <person name="Guichard N."/>
            <person name="Marin F."/>
        </authorList>
    </citation>
    <scope>PROTEIN SEQUENCE OF 54-61; 130-159; 163-198; 222-275 AND 311-326</scope>
    <scope>SUBCELLULAR LOCATION</scope>
    <scope>TISSUE SPECIFICITY</scope>
    <source>
        <tissue>Shell</tissue>
    </source>
</reference>
<evidence type="ECO:0000255" key="1"/>
<evidence type="ECO:0000256" key="2">
    <source>
        <dbReference type="SAM" id="MobiDB-lite"/>
    </source>
</evidence>
<evidence type="ECO:0000269" key="3">
    <source>
    </source>
</evidence>
<evidence type="ECO:0000269" key="4">
    <source ref="1"/>
</evidence>
<evidence type="ECO:0000305" key="5"/>
<sequence length="336" mass="36880">MEFKLLLVLCFNIGLICSQKTKPIGSKPIAVTTAAKTPATSTSPVTNGTGGPKFDLAALQKLLATFQMMQGAQGGNTAPSSSLPGVSSMPMPSANQISRKSNINANSLYQPELMNTNVPYMGNSLQQSRFQNQFLGGQFAPNVNVYRTNNHISSFEQMRLTRSYNLDEEQKFKILEEHNKFRSDVVQKRGTGAMNVLRWSEKLAAQASLEVMNCSYVNQGRGASLASVYEKYTGSSLVSEFMSRWSDEKNRFSLGENCSIQQTCRYSQAVWANTKQVGCAVQYCGDMSFIACSYSPVGNTVNQIAFSPSRGGICSACTTPPNMPVRCNSDHLCEWY</sequence>
<name>SCP1_LOTGI</name>
<accession>B3A0P7</accession>
<dbReference type="EMBL" id="FC619992">
    <property type="status" value="NOT_ANNOTATED_CDS"/>
    <property type="molecule type" value="mRNA"/>
</dbReference>
<dbReference type="EMBL" id="FC623414">
    <property type="status" value="NOT_ANNOTATED_CDS"/>
    <property type="molecule type" value="mRNA"/>
</dbReference>
<dbReference type="SMR" id="B3A0P7"/>
<dbReference type="GO" id="GO:0005576">
    <property type="term" value="C:extracellular region"/>
    <property type="evidence" value="ECO:0007669"/>
    <property type="project" value="UniProtKB-SubCell"/>
</dbReference>
<dbReference type="CDD" id="cd05380">
    <property type="entry name" value="CAP_euk"/>
    <property type="match status" value="1"/>
</dbReference>
<dbReference type="Gene3D" id="3.40.33.10">
    <property type="entry name" value="CAP"/>
    <property type="match status" value="1"/>
</dbReference>
<dbReference type="InterPro" id="IPR014044">
    <property type="entry name" value="CAP_dom"/>
</dbReference>
<dbReference type="InterPro" id="IPR035940">
    <property type="entry name" value="CAP_sf"/>
</dbReference>
<dbReference type="InterPro" id="IPR001283">
    <property type="entry name" value="CRISP-related"/>
</dbReference>
<dbReference type="PANTHER" id="PTHR10334">
    <property type="entry name" value="CYSTEINE-RICH SECRETORY PROTEIN-RELATED"/>
    <property type="match status" value="1"/>
</dbReference>
<dbReference type="Pfam" id="PF00188">
    <property type="entry name" value="CAP"/>
    <property type="match status" value="1"/>
</dbReference>
<dbReference type="PRINTS" id="PR00837">
    <property type="entry name" value="V5TPXLIKE"/>
</dbReference>
<dbReference type="SMART" id="SM00198">
    <property type="entry name" value="SCP"/>
    <property type="match status" value="1"/>
</dbReference>
<dbReference type="SUPFAM" id="SSF55797">
    <property type="entry name" value="PR-1-like"/>
    <property type="match status" value="1"/>
</dbReference>